<evidence type="ECO:0000255" key="1"/>
<evidence type="ECO:0000269" key="2">
    <source>
    </source>
</evidence>
<evidence type="ECO:0000269" key="3">
    <source>
    </source>
</evidence>
<evidence type="ECO:0000269" key="4">
    <source>
    </source>
</evidence>
<evidence type="ECO:0000269" key="5">
    <source>
    </source>
</evidence>
<evidence type="ECO:0000305" key="6"/>
<name>VIRB8_BARHE</name>
<comment type="function">
    <text evidence="3 5">The type IV secretion system VirB/VirD4 is a major virulence determinant for subversion of human endothelial cell (HEC) function. VirB-dependent changes of HEC include massive cytoskeletal rearrangements, a pro-inflammatory activation by nuclear factor NF-kappa-B, inhibition of early and late events of apoptosis, leading to an increased cell survival, and, at high infection doses, a cytostatic or cytotoxic effect, which interferes with a potent VirB-independent mitogenic activity. These changes of HEC require the T4S coupling protein VirD4 and at least one of the effector proteins BepA-G.</text>
</comment>
<comment type="subunit">
    <text evidence="4">Interacts with virB9 and virB10.</text>
</comment>
<comment type="subcellular location">
    <subcellularLocation>
        <location evidence="6">Cell inner membrane</location>
        <topology evidence="6">Single-pass membrane protein</topology>
    </subcellularLocation>
</comment>
<comment type="induction">
    <text evidence="2">During the interaction with the intracellular environment of host cells.</text>
</comment>
<comment type="similarity">
    <text evidence="6">Belongs to the virB8 family.</text>
</comment>
<comment type="sequence caution" evidence="6">
    <conflict type="erroneous initiation">
        <sequence resource="EMBL-CDS" id="AAF00946"/>
    </conflict>
</comment>
<sequence>MKHSLRTLWRLRVKINEFNEYIKEARSFDIDRMHGMRQRMRIAMALTVLFGLMTIALALAVAALTPLKTVEPFVIRVDNSTGIIETVSALKETPNDYDEAITRYFASKYVRAREGFQLSEAEHNFRLVSLLSSPEEQSRFAKWYAGNNPESPQNIYQNMIATVTIKSISFLSKDLIQVRYYKTVRELNDKENISHWVSILNFSYINAQISTQDRLINPLGFQVSEYRSDPEVIQ</sequence>
<reference key="1">
    <citation type="journal article" date="2000" name="DNA Cell Biol.">
        <title>The gene encoding the 17-kDa antigen of Bartonella henselae is located within a cluster of genes homologous to the virB virulence operon.</title>
        <authorList>
            <person name="Padmalayam I."/>
            <person name="Karem K."/>
            <person name="Baumstark B.R."/>
            <person name="Massung R."/>
        </authorList>
    </citation>
    <scope>NUCLEOTIDE SEQUENCE [GENOMIC DNA]</scope>
    <source>
        <strain>ATCC 49882 / DSM 28221 / CCUG 30454 / Houston 1</strain>
    </source>
</reference>
<reference key="2">
    <citation type="journal article" date="2004" name="Proc. Natl. Acad. Sci. U.S.A.">
        <title>The louse-borne human pathogen Bartonella quintana is a genomic derivative of the zoonotic agent Bartonella henselae.</title>
        <authorList>
            <person name="Alsmark U.C.M."/>
            <person name="Frank A.C."/>
            <person name="Karlberg E.O."/>
            <person name="Legault B.-A."/>
            <person name="Ardell D.H."/>
            <person name="Canbaeck B."/>
            <person name="Eriksson A.-S."/>
            <person name="Naeslund A.K."/>
            <person name="Handley S.A."/>
            <person name="Huvet M."/>
            <person name="La Scola B."/>
            <person name="Holmberg M."/>
            <person name="Andersson S.G.E."/>
        </authorList>
    </citation>
    <scope>NUCLEOTIDE SEQUENCE [LARGE SCALE GENOMIC DNA]</scope>
    <source>
        <strain>ATCC 49882 / DSM 28221 / CCUG 30454 / Houston 1</strain>
    </source>
</reference>
<reference key="3">
    <citation type="journal article" date="2001" name="Infect. Immun.">
        <title>Intracellular induction of the Bartonella henselae virB operon by human endothelial cells.</title>
        <authorList>
            <person name="Schmiederer M."/>
            <person name="Arcenas R."/>
            <person name="Widen R."/>
            <person name="Valkov N."/>
            <person name="Anderson B.E."/>
        </authorList>
    </citation>
    <scope>INDUCTION</scope>
    <source>
        <strain>ATCC 49882 / DSM 28221 / CCUG 30454 / Houston 1</strain>
    </source>
</reference>
<reference key="4">
    <citation type="journal article" date="2004" name="J. Bacteriol.">
        <title>Interaction between protein subunits of the type IV secretion system of Bartonella henselae.</title>
        <authorList>
            <person name="Shamaei-Tousi A."/>
            <person name="Cahill R."/>
            <person name="Frankel G."/>
        </authorList>
    </citation>
    <scope>INTERACTION WITH VIRB9 AND VIRB10</scope>
</reference>
<reference key="5">
    <citation type="journal article" date="2004" name="Mol. Microbiol.">
        <title>The VirB type IV secretion system of Bartonella henselae mediates invasion, proinflammatory activation and antiapoptotic protection of endothelial cells.</title>
        <authorList>
            <person name="Schmid M.C."/>
            <person name="Schulein R."/>
            <person name="Dehio M."/>
            <person name="Denecker G."/>
            <person name="Carena I."/>
            <person name="Dehio C."/>
        </authorList>
    </citation>
    <scope>FUNCTION</scope>
    <source>
        <strain>ATCC 49882 / DSM 28221 / CCUG 30454 / Houston 1</strain>
    </source>
</reference>
<reference key="6">
    <citation type="journal article" date="2005" name="Proc. Natl. Acad. Sci. U.S.A.">
        <title>A bipartite signal mediates the transfer of type IV secretion substrates of Bartonella henselae into human cells.</title>
        <authorList>
            <person name="Schulein R."/>
            <person name="Guye P."/>
            <person name="Rhomberg T.A."/>
            <person name="Schmid M.C."/>
            <person name="Schroeder G."/>
            <person name="Vergunst A.C."/>
            <person name="Carena I."/>
            <person name="Dehio C."/>
        </authorList>
    </citation>
    <scope>FUNCTION</scope>
    <source>
        <strain>ATCC 49882 / DSM 28221 / CCUG 30454 / Houston 1</strain>
    </source>
</reference>
<keyword id="KW-0997">Cell inner membrane</keyword>
<keyword id="KW-1003">Cell membrane</keyword>
<keyword id="KW-0472">Membrane</keyword>
<keyword id="KW-0812">Transmembrane</keyword>
<keyword id="KW-1133">Transmembrane helix</keyword>
<keyword id="KW-0813">Transport</keyword>
<keyword id="KW-0843">Virulence</keyword>
<proteinExistence type="evidence at protein level"/>
<dbReference type="EMBL" id="AF182718">
    <property type="protein sequence ID" value="AAF00946.1"/>
    <property type="status" value="ALT_INIT"/>
    <property type="molecule type" value="Genomic_DNA"/>
</dbReference>
<dbReference type="EMBL" id="BX897699">
    <property type="protein sequence ID" value="CAF28105.1"/>
    <property type="molecule type" value="Genomic_DNA"/>
</dbReference>
<dbReference type="SMR" id="Q6G2B4"/>
<dbReference type="PaxDb" id="283166-BH13320"/>
<dbReference type="EnsemblBacteria" id="CAF28105">
    <property type="protein sequence ID" value="CAF28105"/>
    <property type="gene ID" value="BH13320"/>
</dbReference>
<dbReference type="KEGG" id="bhe:BH13320"/>
<dbReference type="eggNOG" id="COG3736">
    <property type="taxonomic scope" value="Bacteria"/>
</dbReference>
<dbReference type="Proteomes" id="UP000000421">
    <property type="component" value="Chromosome"/>
</dbReference>
<dbReference type="GO" id="GO:0005886">
    <property type="term" value="C:plasma membrane"/>
    <property type="evidence" value="ECO:0007669"/>
    <property type="project" value="UniProtKB-SubCell"/>
</dbReference>
<dbReference type="GO" id="GO:0030255">
    <property type="term" value="P:protein secretion by the type IV secretion system"/>
    <property type="evidence" value="ECO:0007669"/>
    <property type="project" value="InterPro"/>
</dbReference>
<dbReference type="CDD" id="cd16424">
    <property type="entry name" value="VirB8"/>
    <property type="match status" value="1"/>
</dbReference>
<dbReference type="Gene3D" id="3.10.450.230">
    <property type="entry name" value="VirB8 protein"/>
    <property type="match status" value="1"/>
</dbReference>
<dbReference type="InterPro" id="IPR032710">
    <property type="entry name" value="NTF2-like_dom_sf"/>
</dbReference>
<dbReference type="InterPro" id="IPR007430">
    <property type="entry name" value="VirB8"/>
</dbReference>
<dbReference type="InterPro" id="IPR026264">
    <property type="entry name" value="VirB8/PtlE"/>
</dbReference>
<dbReference type="Pfam" id="PF04335">
    <property type="entry name" value="VirB8"/>
    <property type="match status" value="1"/>
</dbReference>
<dbReference type="PIRSF" id="PIRSF003299">
    <property type="entry name" value="VirB8_PtlE"/>
    <property type="match status" value="1"/>
</dbReference>
<dbReference type="SUPFAM" id="SSF54427">
    <property type="entry name" value="NTF2-like"/>
    <property type="match status" value="1"/>
</dbReference>
<feature type="chain" id="PRO_0000273531" description="Type IV secretion system protein virB8">
    <location>
        <begin position="1"/>
        <end position="234"/>
    </location>
</feature>
<feature type="topological domain" description="Cytoplasmic" evidence="1">
    <location>
        <begin position="1"/>
        <end position="41"/>
    </location>
</feature>
<feature type="transmembrane region" description="Helical" evidence="1">
    <location>
        <begin position="42"/>
        <end position="62"/>
    </location>
</feature>
<feature type="topological domain" description="Periplasmic" evidence="1">
    <location>
        <begin position="63"/>
        <end position="234"/>
    </location>
</feature>
<protein>
    <recommendedName>
        <fullName>Type IV secretion system protein virB8</fullName>
    </recommendedName>
</protein>
<gene>
    <name type="primary">virB8</name>
    <name type="ordered locus">BH13320</name>
</gene>
<accession>Q6G2B4</accession>
<accession>Q9RND0</accession>
<organism>
    <name type="scientific">Bartonella henselae (strain ATCC 49882 / DSM 28221 / CCUG 30454 / Houston 1)</name>
    <name type="common">Rochalimaea henselae</name>
    <dbReference type="NCBI Taxonomy" id="283166"/>
    <lineage>
        <taxon>Bacteria</taxon>
        <taxon>Pseudomonadati</taxon>
        <taxon>Pseudomonadota</taxon>
        <taxon>Alphaproteobacteria</taxon>
        <taxon>Hyphomicrobiales</taxon>
        <taxon>Bartonellaceae</taxon>
        <taxon>Bartonella</taxon>
    </lineage>
</organism>